<sequence>MATKRTFQPSNLKRKRDHGFRARMKTADGRKILSRRRAKGRKVLSA</sequence>
<feature type="chain" id="PRO_1000196114" description="Large ribosomal subunit protein bL34">
    <location>
        <begin position="1"/>
        <end position="46"/>
    </location>
</feature>
<feature type="region of interest" description="Disordered" evidence="2">
    <location>
        <begin position="1"/>
        <end position="46"/>
    </location>
</feature>
<feature type="compositionally biased region" description="Polar residues" evidence="2">
    <location>
        <begin position="1"/>
        <end position="11"/>
    </location>
</feature>
<feature type="compositionally biased region" description="Basic residues" evidence="2">
    <location>
        <begin position="12"/>
        <end position="24"/>
    </location>
</feature>
<feature type="compositionally biased region" description="Basic residues" evidence="2">
    <location>
        <begin position="32"/>
        <end position="46"/>
    </location>
</feature>
<reference key="1">
    <citation type="submission" date="2008-06" db="EMBL/GenBank/DDBJ databases">
        <title>Complete sequence of Stenotrophomonas maltophilia R551-3.</title>
        <authorList>
            <consortium name="US DOE Joint Genome Institute"/>
            <person name="Lucas S."/>
            <person name="Copeland A."/>
            <person name="Lapidus A."/>
            <person name="Glavina del Rio T."/>
            <person name="Dalin E."/>
            <person name="Tice H."/>
            <person name="Pitluck S."/>
            <person name="Chain P."/>
            <person name="Malfatti S."/>
            <person name="Shin M."/>
            <person name="Vergez L."/>
            <person name="Lang D."/>
            <person name="Schmutz J."/>
            <person name="Larimer F."/>
            <person name="Land M."/>
            <person name="Hauser L."/>
            <person name="Kyrpides N."/>
            <person name="Mikhailova N."/>
            <person name="Taghavi S."/>
            <person name="Monchy S."/>
            <person name="Newman L."/>
            <person name="Vangronsveld J."/>
            <person name="van der Lelie D."/>
            <person name="Richardson P."/>
        </authorList>
    </citation>
    <scope>NUCLEOTIDE SEQUENCE [LARGE SCALE GENOMIC DNA]</scope>
    <source>
        <strain>R551-3</strain>
    </source>
</reference>
<organism>
    <name type="scientific">Stenotrophomonas maltophilia (strain R551-3)</name>
    <dbReference type="NCBI Taxonomy" id="391008"/>
    <lineage>
        <taxon>Bacteria</taxon>
        <taxon>Pseudomonadati</taxon>
        <taxon>Pseudomonadota</taxon>
        <taxon>Gammaproteobacteria</taxon>
        <taxon>Lysobacterales</taxon>
        <taxon>Lysobacteraceae</taxon>
        <taxon>Stenotrophomonas</taxon>
        <taxon>Stenotrophomonas maltophilia group</taxon>
    </lineage>
</organism>
<keyword id="KW-0687">Ribonucleoprotein</keyword>
<keyword id="KW-0689">Ribosomal protein</keyword>
<name>RL34_STRM5</name>
<proteinExistence type="inferred from homology"/>
<protein>
    <recommendedName>
        <fullName evidence="1">Large ribosomal subunit protein bL34</fullName>
    </recommendedName>
    <alternativeName>
        <fullName evidence="3">50S ribosomal protein L34</fullName>
    </alternativeName>
</protein>
<gene>
    <name evidence="1" type="primary">rpmH</name>
    <name type="ordered locus">Smal_4045</name>
</gene>
<evidence type="ECO:0000255" key="1">
    <source>
        <dbReference type="HAMAP-Rule" id="MF_00391"/>
    </source>
</evidence>
<evidence type="ECO:0000256" key="2">
    <source>
        <dbReference type="SAM" id="MobiDB-lite"/>
    </source>
</evidence>
<evidence type="ECO:0000305" key="3"/>
<dbReference type="EMBL" id="CP001111">
    <property type="protein sequence ID" value="ACF53744.1"/>
    <property type="molecule type" value="Genomic_DNA"/>
</dbReference>
<dbReference type="RefSeq" id="WP_006404565.1">
    <property type="nucleotide sequence ID" value="NC_011071.1"/>
</dbReference>
<dbReference type="SMR" id="B4SPG2"/>
<dbReference type="STRING" id="391008.Smal_4045"/>
<dbReference type="GeneID" id="97226538"/>
<dbReference type="KEGG" id="smt:Smal_4045"/>
<dbReference type="eggNOG" id="COG0230">
    <property type="taxonomic scope" value="Bacteria"/>
</dbReference>
<dbReference type="HOGENOM" id="CLU_129938_2_0_6"/>
<dbReference type="OrthoDB" id="9804164at2"/>
<dbReference type="Proteomes" id="UP000001867">
    <property type="component" value="Chromosome"/>
</dbReference>
<dbReference type="GO" id="GO:1990904">
    <property type="term" value="C:ribonucleoprotein complex"/>
    <property type="evidence" value="ECO:0007669"/>
    <property type="project" value="UniProtKB-KW"/>
</dbReference>
<dbReference type="GO" id="GO:0005840">
    <property type="term" value="C:ribosome"/>
    <property type="evidence" value="ECO:0007669"/>
    <property type="project" value="UniProtKB-KW"/>
</dbReference>
<dbReference type="GO" id="GO:0003735">
    <property type="term" value="F:structural constituent of ribosome"/>
    <property type="evidence" value="ECO:0007669"/>
    <property type="project" value="InterPro"/>
</dbReference>
<dbReference type="GO" id="GO:0006412">
    <property type="term" value="P:translation"/>
    <property type="evidence" value="ECO:0007669"/>
    <property type="project" value="UniProtKB-UniRule"/>
</dbReference>
<dbReference type="FunFam" id="1.10.287.3980:FF:000001">
    <property type="entry name" value="Mitochondrial ribosomal protein L34"/>
    <property type="match status" value="1"/>
</dbReference>
<dbReference type="Gene3D" id="1.10.287.3980">
    <property type="match status" value="1"/>
</dbReference>
<dbReference type="HAMAP" id="MF_00391">
    <property type="entry name" value="Ribosomal_bL34"/>
    <property type="match status" value="1"/>
</dbReference>
<dbReference type="InterPro" id="IPR000271">
    <property type="entry name" value="Ribosomal_bL34"/>
</dbReference>
<dbReference type="InterPro" id="IPR020939">
    <property type="entry name" value="Ribosomal_bL34_CS"/>
</dbReference>
<dbReference type="NCBIfam" id="TIGR01030">
    <property type="entry name" value="rpmH_bact"/>
    <property type="match status" value="1"/>
</dbReference>
<dbReference type="PANTHER" id="PTHR14503:SF4">
    <property type="entry name" value="LARGE RIBOSOMAL SUBUNIT PROTEIN BL34M"/>
    <property type="match status" value="1"/>
</dbReference>
<dbReference type="PANTHER" id="PTHR14503">
    <property type="entry name" value="MITOCHONDRIAL RIBOSOMAL PROTEIN 34 FAMILY MEMBER"/>
    <property type="match status" value="1"/>
</dbReference>
<dbReference type="Pfam" id="PF00468">
    <property type="entry name" value="Ribosomal_L34"/>
    <property type="match status" value="1"/>
</dbReference>
<dbReference type="PROSITE" id="PS00784">
    <property type="entry name" value="RIBOSOMAL_L34"/>
    <property type="match status" value="1"/>
</dbReference>
<comment type="similarity">
    <text evidence="1">Belongs to the bacterial ribosomal protein bL34 family.</text>
</comment>
<accession>B4SPG2</accession>